<organism>
    <name type="scientific">Saccharomyces cerevisiae (strain ATCC 204508 / S288c)</name>
    <name type="common">Baker's yeast</name>
    <dbReference type="NCBI Taxonomy" id="559292"/>
    <lineage>
        <taxon>Eukaryota</taxon>
        <taxon>Fungi</taxon>
        <taxon>Dikarya</taxon>
        <taxon>Ascomycota</taxon>
        <taxon>Saccharomycotina</taxon>
        <taxon>Saccharomycetes</taxon>
        <taxon>Saccharomycetales</taxon>
        <taxon>Saccharomycetaceae</taxon>
        <taxon>Saccharomyces</taxon>
    </lineage>
</organism>
<accession>P38753</accession>
<accession>D3DKR2</accession>
<keyword id="KW-0002">3D-structure</keyword>
<keyword id="KW-0007">Acetylation</keyword>
<keyword id="KW-0967">Endosome</keyword>
<keyword id="KW-0472">Membrane</keyword>
<keyword id="KW-0597">Phosphoprotein</keyword>
<keyword id="KW-0653">Protein transport</keyword>
<keyword id="KW-1185">Reference proteome</keyword>
<keyword id="KW-0728">SH3 domain</keyword>
<keyword id="KW-0813">Transport</keyword>
<proteinExistence type="evidence at protein level"/>
<gene>
    <name type="primary">HSE1</name>
    <name type="ordered locus">YHL002W</name>
</gene>
<reference key="1">
    <citation type="journal article" date="1994" name="Science">
        <title>Complete nucleotide sequence of Saccharomyces cerevisiae chromosome VIII.</title>
        <authorList>
            <person name="Johnston M."/>
            <person name="Andrews S."/>
            <person name="Brinkman R."/>
            <person name="Cooper J."/>
            <person name="Ding H."/>
            <person name="Dover J."/>
            <person name="Du Z."/>
            <person name="Favello A."/>
            <person name="Fulton L."/>
            <person name="Gattung S."/>
            <person name="Geisel C."/>
            <person name="Kirsten J."/>
            <person name="Kucaba T."/>
            <person name="Hillier L.W."/>
            <person name="Jier M."/>
            <person name="Johnston L."/>
            <person name="Langston Y."/>
            <person name="Latreille P."/>
            <person name="Louis E.J."/>
            <person name="Macri C."/>
            <person name="Mardis E."/>
            <person name="Menezes S."/>
            <person name="Mouser L."/>
            <person name="Nhan M."/>
            <person name="Rifkin L."/>
            <person name="Riles L."/>
            <person name="St Peter H."/>
            <person name="Trevaskis E."/>
            <person name="Vaughan K."/>
            <person name="Vignati D."/>
            <person name="Wilcox L."/>
            <person name="Wohldman P."/>
            <person name="Waterston R."/>
            <person name="Wilson R."/>
            <person name="Vaudin M."/>
        </authorList>
    </citation>
    <scope>NUCLEOTIDE SEQUENCE [LARGE SCALE GENOMIC DNA]</scope>
    <source>
        <strain>ATCC 204508 / S288c</strain>
    </source>
</reference>
<reference key="2">
    <citation type="journal article" date="2014" name="G3 (Bethesda)">
        <title>The reference genome sequence of Saccharomyces cerevisiae: Then and now.</title>
        <authorList>
            <person name="Engel S.R."/>
            <person name="Dietrich F.S."/>
            <person name="Fisk D.G."/>
            <person name="Binkley G."/>
            <person name="Balakrishnan R."/>
            <person name="Costanzo M.C."/>
            <person name="Dwight S.S."/>
            <person name="Hitz B.C."/>
            <person name="Karra K."/>
            <person name="Nash R.S."/>
            <person name="Weng S."/>
            <person name="Wong E.D."/>
            <person name="Lloyd P."/>
            <person name="Skrzypek M.S."/>
            <person name="Miyasato S.R."/>
            <person name="Simison M."/>
            <person name="Cherry J.M."/>
        </authorList>
    </citation>
    <scope>GENOME REANNOTATION</scope>
    <source>
        <strain>ATCC 204508 / S288c</strain>
    </source>
</reference>
<reference key="3">
    <citation type="journal article" date="2002" name="Nat. Cell Biol.">
        <title>The Vps27p-Hse1p complex binds ubiquitin and mediates endosomal protein sorting.</title>
        <authorList>
            <person name="Bilodeau P.S."/>
            <person name="Urbanowski J.L."/>
            <person name="Winistorfer S.C."/>
            <person name="Piper R.C."/>
        </authorList>
    </citation>
    <scope>IDENTIFICATION IN THE ESCRT-0 COMPLEX</scope>
    <scope>FUNCTION OF THE ESCRT-0 COMPLEX</scope>
    <scope>SUBCELLULAR LOCATION</scope>
</reference>
<reference key="4">
    <citation type="journal article" date="2003" name="J. Cell Biol.">
        <title>Vps27-Hse1 and ESCRT-I complexes cooperate to increase efficiency of sorting ubiquitinated proteins at the endosome.</title>
        <authorList>
            <person name="Bilodeau P.S."/>
            <person name="Winistorfer S.C."/>
            <person name="Kearney W.R."/>
            <person name="Robertson A.D."/>
            <person name="Piper R.C."/>
        </authorList>
    </citation>
    <scope>FUNCTION OF THE ESCRT-0 COMPLEX</scope>
</reference>
<reference key="5">
    <citation type="journal article" date="2003" name="Nature">
        <title>Global analysis of protein localization in budding yeast.</title>
        <authorList>
            <person name="Huh W.-K."/>
            <person name="Falvo J.V."/>
            <person name="Gerke L.C."/>
            <person name="Carroll A.S."/>
            <person name="Howson R.W."/>
            <person name="Weissman J.S."/>
            <person name="O'Shea E.K."/>
        </authorList>
    </citation>
    <scope>SUBCELLULAR LOCATION [LARGE SCALE ANALYSIS]</scope>
</reference>
<reference key="6">
    <citation type="journal article" date="2003" name="Nature">
        <title>Global analysis of protein expression in yeast.</title>
        <authorList>
            <person name="Ghaemmaghami S."/>
            <person name="Huh W.-K."/>
            <person name="Bower K."/>
            <person name="Howson R.W."/>
            <person name="Belle A."/>
            <person name="Dephoure N."/>
            <person name="O'Shea E.K."/>
            <person name="Weissman J.S."/>
        </authorList>
    </citation>
    <scope>LEVEL OF PROTEIN EXPRESSION [LARGE SCALE ANALYSIS]</scope>
</reference>
<reference key="7">
    <citation type="journal article" date="2004" name="Traffic">
        <title>Protein-protein interactions of ESCRT complexes in the yeast Saccharomyces cerevisiae.</title>
        <authorList>
            <person name="Bowers K."/>
            <person name="Lottridge J."/>
            <person name="Helliwell S.B."/>
            <person name="Goldthwaite L.M."/>
            <person name="Luzio J.P."/>
            <person name="Stevens T.H."/>
        </authorList>
    </citation>
    <scope>INTERACTION WITH RSP5; VPS23 AND VPS27</scope>
    <scope>FUNCTION OF THE ESCRT-0 COMPLEX</scope>
</reference>
<reference key="8">
    <citation type="journal article" date="2007" name="J. Proteome Res.">
        <title>Large-scale phosphorylation analysis of alpha-factor-arrested Saccharomyces cerevisiae.</title>
        <authorList>
            <person name="Li X."/>
            <person name="Gerber S.A."/>
            <person name="Rudner A.D."/>
            <person name="Beausoleil S.A."/>
            <person name="Haas W."/>
            <person name="Villen J."/>
            <person name="Elias J.E."/>
            <person name="Gygi S.P."/>
        </authorList>
    </citation>
    <scope>PHOSPHORYLATION [LARGE SCALE ANALYSIS] AT SER-162</scope>
    <scope>IDENTIFICATION BY MASS SPECTROMETRY [LARGE SCALE ANALYSIS]</scope>
    <source>
        <strain>ADR376</strain>
    </source>
</reference>
<reference key="9">
    <citation type="journal article" date="2007" name="Mol. Biol. Cell">
        <title>Hse1, a component of the yeast Hrs-STAM ubiquitin-sorting complex, associates with ubiquitin peptidases and a ligase to control sorting efficiency into multivesicular bodies.</title>
        <authorList>
            <person name="Ren J."/>
            <person name="Kee Y."/>
            <person name="Huibregtse J.M."/>
            <person name="Piper R.C."/>
        </authorList>
    </citation>
    <scope>FUNCTION</scope>
    <scope>INTERACTION WITH RSP5 AND UBP7</scope>
</reference>
<reference key="10">
    <citation type="journal article" date="2008" name="J. Biol. Chem.">
        <title>DOA1/UFD3 plays a role in sorting ubiquitinated membrane proteins into multivesicular bodies.</title>
        <authorList>
            <person name="Ren J."/>
            <person name="Pashkova N."/>
            <person name="Winistorfer S."/>
            <person name="Piper R.C."/>
        </authorList>
    </citation>
    <scope>IDENTIFICATION IN A COMPLEX WITH VPS27 AND DOA1</scope>
    <scope>INTERACTION WITH DOA1</scope>
    <scope>MUTAGENESIS OF 254-TRP-TRP-255</scope>
</reference>
<reference key="11">
    <citation type="journal article" date="2008" name="Mol. Cell. Proteomics">
        <title>A multidimensional chromatography technology for in-depth phosphoproteome analysis.</title>
        <authorList>
            <person name="Albuquerque C.P."/>
            <person name="Smolka M.B."/>
            <person name="Payne S.H."/>
            <person name="Bafna V."/>
            <person name="Eng J."/>
            <person name="Zhou H."/>
        </authorList>
    </citation>
    <scope>PHOSPHORYLATION [LARGE SCALE ANALYSIS] AT SER-162</scope>
    <scope>IDENTIFICATION BY MASS SPECTROMETRY [LARGE SCALE ANALYSIS]</scope>
</reference>
<reference key="12">
    <citation type="journal article" date="2009" name="Science">
        <title>Global analysis of Cdk1 substrate phosphorylation sites provides insights into evolution.</title>
        <authorList>
            <person name="Holt L.J."/>
            <person name="Tuch B.B."/>
            <person name="Villen J."/>
            <person name="Johnson A.D."/>
            <person name="Gygi S.P."/>
            <person name="Morgan D.O."/>
        </authorList>
    </citation>
    <scope>PHOSPHORYLATION [LARGE SCALE ANALYSIS] AT SER-162</scope>
    <scope>IDENTIFICATION BY MASS SPECTROMETRY [LARGE SCALE ANALYSIS]</scope>
</reference>
<reference key="13">
    <citation type="journal article" date="2012" name="Proc. Natl. Acad. Sci. U.S.A.">
        <title>N-terminal acetylome analyses and functional insights of the N-terminal acetyltransferase NatB.</title>
        <authorList>
            <person name="Van Damme P."/>
            <person name="Lasa M."/>
            <person name="Polevoda B."/>
            <person name="Gazquez C."/>
            <person name="Elosegui-Artola A."/>
            <person name="Kim D.S."/>
            <person name="De Juan-Pardo E."/>
            <person name="Demeyer K."/>
            <person name="Hole K."/>
            <person name="Larrea E."/>
            <person name="Timmerman E."/>
            <person name="Prieto J."/>
            <person name="Arnesen T."/>
            <person name="Sherman F."/>
            <person name="Gevaert K."/>
            <person name="Aldabe R."/>
        </authorList>
    </citation>
    <scope>ACETYLATION [LARGE SCALE ANALYSIS] AT SER-2</scope>
    <scope>CLEAVAGE OF INITIATOR METHIONINE [LARGE SCALE ANALYSIS]</scope>
    <scope>IDENTIFICATION BY MASS SPECTROMETRY [LARGE SCALE ANALYSIS]</scope>
</reference>
<evidence type="ECO:0000255" key="1">
    <source>
        <dbReference type="PROSITE-ProRule" id="PRU00192"/>
    </source>
</evidence>
<evidence type="ECO:0000255" key="2">
    <source>
        <dbReference type="PROSITE-ProRule" id="PRU00213"/>
    </source>
</evidence>
<evidence type="ECO:0000255" key="3">
    <source>
        <dbReference type="PROSITE-ProRule" id="PRU00218"/>
    </source>
</evidence>
<evidence type="ECO:0000256" key="4">
    <source>
        <dbReference type="SAM" id="MobiDB-lite"/>
    </source>
</evidence>
<evidence type="ECO:0000269" key="5">
    <source>
    </source>
</evidence>
<evidence type="ECO:0000269" key="6">
    <source>
    </source>
</evidence>
<evidence type="ECO:0000269" key="7">
    <source>
    </source>
</evidence>
<evidence type="ECO:0000269" key="8">
    <source>
    </source>
</evidence>
<evidence type="ECO:0000269" key="9">
    <source>
    </source>
</evidence>
<evidence type="ECO:0000269" key="10">
    <source>
    </source>
</evidence>
<evidence type="ECO:0000269" key="11">
    <source>
    </source>
</evidence>
<evidence type="ECO:0000305" key="12"/>
<evidence type="ECO:0007744" key="13">
    <source>
    </source>
</evidence>
<evidence type="ECO:0007744" key="14">
    <source>
    </source>
</evidence>
<evidence type="ECO:0007744" key="15">
    <source>
    </source>
</evidence>
<evidence type="ECO:0007744" key="16">
    <source>
    </source>
</evidence>
<evidence type="ECO:0007829" key="17">
    <source>
        <dbReference type="PDB" id="2PJW"/>
    </source>
</evidence>
<dbReference type="EMBL" id="U10555">
    <property type="protein sequence ID" value="AAB68427.1"/>
    <property type="molecule type" value="Genomic_DNA"/>
</dbReference>
<dbReference type="EMBL" id="BK006934">
    <property type="protein sequence ID" value="DAA06685.1"/>
    <property type="molecule type" value="Genomic_DNA"/>
</dbReference>
<dbReference type="PIR" id="S46798">
    <property type="entry name" value="S46798"/>
</dbReference>
<dbReference type="RefSeq" id="NP_011861.1">
    <property type="nucleotide sequence ID" value="NM_001179082.1"/>
</dbReference>
<dbReference type="PDB" id="2PJW">
    <property type="method" value="X-ray"/>
    <property type="resolution" value="3.01 A"/>
    <property type="chains" value="H=288-375"/>
</dbReference>
<dbReference type="PDBsum" id="2PJW"/>
<dbReference type="SMR" id="P38753"/>
<dbReference type="BioGRID" id="36423">
    <property type="interactions" value="351"/>
</dbReference>
<dbReference type="ComplexPortal" id="CPX-1622">
    <property type="entry name" value="ESCRT-0 complex"/>
</dbReference>
<dbReference type="DIP" id="DIP-1742N"/>
<dbReference type="FunCoup" id="P38753">
    <property type="interactions" value="438"/>
</dbReference>
<dbReference type="IntAct" id="P38753">
    <property type="interactions" value="44"/>
</dbReference>
<dbReference type="MINT" id="P38753"/>
<dbReference type="STRING" id="4932.YHL002W"/>
<dbReference type="TCDB" id="3.A.31.1.1">
    <property type="family name" value="the endosomal sorting complexes required for transport iii (escrt-iii) family"/>
</dbReference>
<dbReference type="iPTMnet" id="P38753"/>
<dbReference type="PaxDb" id="4932-YHL002W"/>
<dbReference type="PeptideAtlas" id="P38753"/>
<dbReference type="EnsemblFungi" id="YHL002W_mRNA">
    <property type="protein sequence ID" value="YHL002W"/>
    <property type="gene ID" value="YHL002W"/>
</dbReference>
<dbReference type="GeneID" id="856387"/>
<dbReference type="KEGG" id="sce:YHL002W"/>
<dbReference type="AGR" id="SGD:S000000994"/>
<dbReference type="SGD" id="S000000994">
    <property type="gene designation" value="HSE1"/>
</dbReference>
<dbReference type="VEuPathDB" id="FungiDB:YHL002W"/>
<dbReference type="eggNOG" id="KOG2199">
    <property type="taxonomic scope" value="Eukaryota"/>
</dbReference>
<dbReference type="GeneTree" id="ENSGT00940000168664"/>
<dbReference type="HOGENOM" id="CLU_010104_2_0_1"/>
<dbReference type="InParanoid" id="P38753"/>
<dbReference type="OMA" id="QVYRDWW"/>
<dbReference type="OrthoDB" id="10255964at2759"/>
<dbReference type="BioCyc" id="YEAST:G3O-31026-MONOMER"/>
<dbReference type="Reactome" id="R-SCE-9013420">
    <property type="pathway name" value="RHOU GTPase cycle"/>
</dbReference>
<dbReference type="BioGRID-ORCS" id="856387">
    <property type="hits" value="1 hit in 10 CRISPR screens"/>
</dbReference>
<dbReference type="EvolutionaryTrace" id="P38753"/>
<dbReference type="PRO" id="PR:P38753"/>
<dbReference type="Proteomes" id="UP000002311">
    <property type="component" value="Chromosome VIII"/>
</dbReference>
<dbReference type="RNAct" id="P38753">
    <property type="molecule type" value="protein"/>
</dbReference>
<dbReference type="GO" id="GO:0005768">
    <property type="term" value="C:endosome"/>
    <property type="evidence" value="ECO:0000314"/>
    <property type="project" value="SGD"/>
</dbReference>
<dbReference type="GO" id="GO:0010008">
    <property type="term" value="C:endosome membrane"/>
    <property type="evidence" value="ECO:0007669"/>
    <property type="project" value="UniProtKB-SubCell"/>
</dbReference>
<dbReference type="GO" id="GO:0033565">
    <property type="term" value="C:ESCRT-0 complex"/>
    <property type="evidence" value="ECO:0000353"/>
    <property type="project" value="SGD"/>
</dbReference>
<dbReference type="GO" id="GO:0032991">
    <property type="term" value="C:protein-containing complex"/>
    <property type="evidence" value="ECO:0000315"/>
    <property type="project" value="CAFA"/>
</dbReference>
<dbReference type="GO" id="GO:0005774">
    <property type="term" value="C:vacuolar membrane"/>
    <property type="evidence" value="ECO:0000314"/>
    <property type="project" value="SGD"/>
</dbReference>
<dbReference type="GO" id="GO:0035091">
    <property type="term" value="F:phosphatidylinositol binding"/>
    <property type="evidence" value="ECO:0007669"/>
    <property type="project" value="InterPro"/>
</dbReference>
<dbReference type="GO" id="GO:0019904">
    <property type="term" value="F:protein domain specific binding"/>
    <property type="evidence" value="ECO:0000353"/>
    <property type="project" value="CAFA"/>
</dbReference>
<dbReference type="GO" id="GO:0046982">
    <property type="term" value="F:protein heterodimerization activity"/>
    <property type="evidence" value="ECO:0000315"/>
    <property type="project" value="CAFA"/>
</dbReference>
<dbReference type="GO" id="GO:0043130">
    <property type="term" value="F:ubiquitin binding"/>
    <property type="evidence" value="ECO:0000314"/>
    <property type="project" value="SGD"/>
</dbReference>
<dbReference type="GO" id="GO:1904669">
    <property type="term" value="P:ATP export"/>
    <property type="evidence" value="ECO:0000315"/>
    <property type="project" value="SGD"/>
</dbReference>
<dbReference type="GO" id="GO:0045324">
    <property type="term" value="P:late endosome to vacuole transport"/>
    <property type="evidence" value="ECO:0000315"/>
    <property type="project" value="SGD"/>
</dbReference>
<dbReference type="GO" id="GO:0016237">
    <property type="term" value="P:microautophagy"/>
    <property type="evidence" value="ECO:0000315"/>
    <property type="project" value="SGD"/>
</dbReference>
<dbReference type="GO" id="GO:0071985">
    <property type="term" value="P:multivesicular body sorting pathway"/>
    <property type="evidence" value="ECO:0000315"/>
    <property type="project" value="CAFA"/>
</dbReference>
<dbReference type="GO" id="GO:1903319">
    <property type="term" value="P:positive regulation of protein maturation"/>
    <property type="evidence" value="ECO:0000315"/>
    <property type="project" value="CAFA"/>
</dbReference>
<dbReference type="GO" id="GO:0009306">
    <property type="term" value="P:protein secretion"/>
    <property type="evidence" value="ECO:0000315"/>
    <property type="project" value="CAFA"/>
</dbReference>
<dbReference type="GO" id="GO:0006623">
    <property type="term" value="P:protein targeting to vacuole"/>
    <property type="evidence" value="ECO:0000315"/>
    <property type="project" value="SGD"/>
</dbReference>
<dbReference type="GO" id="GO:0043328">
    <property type="term" value="P:protein transport to vacuole involved in ubiquitin-dependent protein catabolic process via the multivesicular body sorting pathway"/>
    <property type="evidence" value="ECO:0000318"/>
    <property type="project" value="GO_Central"/>
</dbReference>
<dbReference type="GO" id="GO:0043162">
    <property type="term" value="P:ubiquitin-dependent protein catabolic process via the multivesicular body sorting pathway"/>
    <property type="evidence" value="ECO:0000314"/>
    <property type="project" value="ComplexPortal"/>
</dbReference>
<dbReference type="CDD" id="cd21386">
    <property type="entry name" value="GAT_Hse1"/>
    <property type="match status" value="1"/>
</dbReference>
<dbReference type="CDD" id="cd11805">
    <property type="entry name" value="SH3_GRB2_like_C"/>
    <property type="match status" value="1"/>
</dbReference>
<dbReference type="CDD" id="cd16978">
    <property type="entry name" value="VHS_HSE1"/>
    <property type="match status" value="1"/>
</dbReference>
<dbReference type="FunFam" id="2.30.30.40:FF:000331">
    <property type="entry name" value="Signal transducing adapter molecule 1"/>
    <property type="match status" value="1"/>
</dbReference>
<dbReference type="Gene3D" id="1.20.5.1940">
    <property type="match status" value="1"/>
</dbReference>
<dbReference type="Gene3D" id="1.25.40.90">
    <property type="match status" value="1"/>
</dbReference>
<dbReference type="Gene3D" id="2.30.30.40">
    <property type="entry name" value="SH3 Domains"/>
    <property type="match status" value="1"/>
</dbReference>
<dbReference type="InterPro" id="IPR008942">
    <property type="entry name" value="ENTH_VHS"/>
</dbReference>
<dbReference type="InterPro" id="IPR036028">
    <property type="entry name" value="SH3-like_dom_sf"/>
</dbReference>
<dbReference type="InterPro" id="IPR001452">
    <property type="entry name" value="SH3_domain"/>
</dbReference>
<dbReference type="InterPro" id="IPR050670">
    <property type="entry name" value="STAM"/>
</dbReference>
<dbReference type="InterPro" id="IPR003903">
    <property type="entry name" value="UIM_dom"/>
</dbReference>
<dbReference type="InterPro" id="IPR002014">
    <property type="entry name" value="VHS_dom"/>
</dbReference>
<dbReference type="PANTHER" id="PTHR45929">
    <property type="entry name" value="JAK PATHWAY SIGNAL TRANSDUCTION ADAPTOR MOLECULE"/>
    <property type="match status" value="1"/>
</dbReference>
<dbReference type="PANTHER" id="PTHR45929:SF3">
    <property type="entry name" value="JAK PATHWAY SIGNAL TRANSDUCTION ADAPTOR MOLECULE"/>
    <property type="match status" value="1"/>
</dbReference>
<dbReference type="Pfam" id="PF00018">
    <property type="entry name" value="SH3_1"/>
    <property type="match status" value="1"/>
</dbReference>
<dbReference type="Pfam" id="PF00790">
    <property type="entry name" value="VHS"/>
    <property type="match status" value="1"/>
</dbReference>
<dbReference type="PRINTS" id="PR00499">
    <property type="entry name" value="P67PHOX"/>
</dbReference>
<dbReference type="PRINTS" id="PR00452">
    <property type="entry name" value="SH3DOMAIN"/>
</dbReference>
<dbReference type="SMART" id="SM00326">
    <property type="entry name" value="SH3"/>
    <property type="match status" value="1"/>
</dbReference>
<dbReference type="SMART" id="SM00726">
    <property type="entry name" value="UIM"/>
    <property type="match status" value="1"/>
</dbReference>
<dbReference type="SMART" id="SM00288">
    <property type="entry name" value="VHS"/>
    <property type="match status" value="1"/>
</dbReference>
<dbReference type="SUPFAM" id="SSF48464">
    <property type="entry name" value="ENTH/VHS domain"/>
    <property type="match status" value="1"/>
</dbReference>
<dbReference type="SUPFAM" id="SSF50044">
    <property type="entry name" value="SH3-domain"/>
    <property type="match status" value="1"/>
</dbReference>
<dbReference type="PROSITE" id="PS50002">
    <property type="entry name" value="SH3"/>
    <property type="match status" value="1"/>
</dbReference>
<dbReference type="PROSITE" id="PS50330">
    <property type="entry name" value="UIM"/>
    <property type="match status" value="1"/>
</dbReference>
<dbReference type="PROSITE" id="PS50179">
    <property type="entry name" value="VHS"/>
    <property type="match status" value="1"/>
</dbReference>
<feature type="initiator methionine" description="Removed" evidence="16">
    <location>
        <position position="1"/>
    </location>
</feature>
<feature type="chain" id="PRO_0000202885" description="Class E vacuolar protein-sorting machinery protein HSE1">
    <location>
        <begin position="2"/>
        <end position="452"/>
    </location>
</feature>
<feature type="domain" description="VHS" evidence="3">
    <location>
        <begin position="15"/>
        <end position="145"/>
    </location>
</feature>
<feature type="domain" description="UIM" evidence="2">
    <location>
        <begin position="162"/>
        <end position="181"/>
    </location>
</feature>
<feature type="domain" description="SH3" evidence="1">
    <location>
        <begin position="217"/>
        <end position="276"/>
    </location>
</feature>
<feature type="region of interest" description="Disordered" evidence="4">
    <location>
        <begin position="144"/>
        <end position="166"/>
    </location>
</feature>
<feature type="region of interest" description="Disordered" evidence="4">
    <location>
        <begin position="187"/>
        <end position="212"/>
    </location>
</feature>
<feature type="region of interest" description="Disordered" evidence="4">
    <location>
        <begin position="389"/>
        <end position="452"/>
    </location>
</feature>
<feature type="compositionally biased region" description="Low complexity" evidence="4">
    <location>
        <begin position="197"/>
        <end position="207"/>
    </location>
</feature>
<feature type="compositionally biased region" description="Polar residues" evidence="4">
    <location>
        <begin position="393"/>
        <end position="433"/>
    </location>
</feature>
<feature type="modified residue" description="N-acetylserine" evidence="16">
    <location>
        <position position="2"/>
    </location>
</feature>
<feature type="modified residue" description="Phosphoserine" evidence="13 14 15">
    <location>
        <position position="162"/>
    </location>
</feature>
<feature type="mutagenesis site" description="Loss of interaction with DOA1." evidence="11">
    <original>WW</original>
    <variation>AA</variation>
    <location>
        <begin position="254"/>
        <end position="255"/>
    </location>
</feature>
<feature type="helix" evidence="17">
    <location>
        <begin position="289"/>
        <end position="294"/>
    </location>
</feature>
<feature type="helix" evidence="17">
    <location>
        <begin position="296"/>
        <end position="310"/>
    </location>
</feature>
<feature type="helix" evidence="17">
    <location>
        <begin position="316"/>
        <end position="319"/>
    </location>
</feature>
<feature type="helix" evidence="17">
    <location>
        <begin position="322"/>
        <end position="331"/>
    </location>
</feature>
<feature type="helix" evidence="17">
    <location>
        <begin position="332"/>
        <end position="334"/>
    </location>
</feature>
<feature type="helix" evidence="17">
    <location>
        <begin position="335"/>
        <end position="371"/>
    </location>
</feature>
<feature type="turn" evidence="17">
    <location>
        <begin position="372"/>
        <end position="374"/>
    </location>
</feature>
<protein>
    <recommendedName>
        <fullName>Class E vacuolar protein-sorting machinery protein HSE1</fullName>
    </recommendedName>
</protein>
<name>HSE1_YEAST</name>
<comment type="function">
    <text evidence="5 8 9 10">Component of the ESCRT-0 complex which is the sorting receptor for ubiquitinated cargo proteins at the multivesicular body (MVB) and recruits ESCRT-I to the MVB outer membrane.</text>
</comment>
<comment type="subunit">
    <text evidence="5 9 10 11">Component of the ESCRT-0 complex composed of HSE1 and VPS27 (PubMed:12055639). Interacts with the ESCRT-I subunit VPS23, the UBP7 deubiquitinase and the E3 ligase RSP5 (PubMed:15086794, PubMed:17079730). May form a complex composed of VPS27, HSE1 and DOA1 (PubMed:18508771). Interacts (via SH3 domain) with DOA1 (PubMed:18508771).</text>
</comment>
<comment type="interaction">
    <interactant intactId="EBI-1382">
        <id>P38753</id>
    </interactant>
    <interactant intactId="EBI-32973">
        <id>Q12168</id>
        <label>ACF2</label>
    </interactant>
    <organismsDiffer>false</organismsDiffer>
    <experiments>2</experiments>
</comment>
<comment type="interaction">
    <interactant intactId="EBI-1382">
        <id>P38753</id>
    </interactant>
    <interactant intactId="EBI-25376">
        <id>P40563</id>
        <label>AIM21</label>
    </interactant>
    <organismsDiffer>false</organismsDiffer>
    <experiments>4</experiments>
</comment>
<comment type="interaction">
    <interactant intactId="EBI-1382">
        <id>P38753</id>
    </interactant>
    <interactant intactId="EBI-6017">
        <id>P36037</id>
        <label>DOA1</label>
    </interactant>
    <organismsDiffer>false</organismsDiffer>
    <experiments>3</experiments>
</comment>
<comment type="interaction">
    <interactant intactId="EBI-1382">
        <id>P38753</id>
    </interactant>
    <interactant intactId="EBI-411625">
        <id>P25604</id>
        <label>STP22</label>
    </interactant>
    <organismsDiffer>false</organismsDiffer>
    <experiments>3</experiments>
</comment>
<comment type="interaction">
    <interactant intactId="EBI-1382">
        <id>P38753</id>
    </interactant>
    <interactant intactId="EBI-19857">
        <id>P40453</id>
        <label>UBP7</label>
    </interactant>
    <organismsDiffer>false</organismsDiffer>
    <experiments>4</experiments>
</comment>
<comment type="interaction">
    <interactant intactId="EBI-1382">
        <id>P38753</id>
    </interactant>
    <interactant intactId="EBI-20380">
        <id>P40343</id>
        <label>VPS27</label>
    </interactant>
    <organismsDiffer>false</organismsDiffer>
    <experiments>9</experiments>
</comment>
<comment type="interaction">
    <interactant intactId="EBI-1382">
        <id>P38753</id>
    </interactant>
    <interactant intactId="EBI-5333021">
        <id>P0CG53</id>
        <label>UBB</label>
    </interactant>
    <organismsDiffer>true</organismsDiffer>
    <experiments>2</experiments>
</comment>
<comment type="subcellular location">
    <subcellularLocation>
        <location evidence="5 6">Endosome membrane</location>
        <topology evidence="5 6">Peripheral membrane protein</topology>
        <orientation evidence="5 6">Cytoplasmic side</orientation>
    </subcellularLocation>
</comment>
<comment type="miscellaneous">
    <text evidence="7">Present with 358 molecules/cell in log phase SD medium.</text>
</comment>
<comment type="similarity">
    <text evidence="12">Belongs to the STAM family.</text>
</comment>
<sequence>MSSSAIKIRNALLKATDPKLRSDNWQYILDVCDLVKEDPEDNGQEVMSLIEKRLEQQDANVILRTLSLTVSLAENCGSRLRQEISSKNFTSLLYALIESHSVHITLKKAVTDVVKQLSDSFKDDPSLRAMGDLYDKIKRKAPYLVQPNVPEKHNMSTQADNSDDEELQKALKMSLFEYEKQKKLQEQEKESAEVLPQQQQQHQQQNQAPAHKIPAQTVVRRVRALYDLTTNEPDELSFRKGDVITVLEQVYRDWWKGALRGNMGIFPLNYVTPIVEPSKEEIEKEKNKEAIVFSQKTTIDQLHNSLNAASKTGNSNEVLQDPHIGDMYGSVTPLRPQVTRMLGKYAKEKEDMLSLRQVLANAERSYNQLMDRAANAHISPPVPGPALYAGMTHANNTPVMPPQRQSYQSNEYSPYPSNLPIQHPTNSANNTPQYGYDLGYSVVSQPPPGYEQ</sequence>